<sequence length="143" mass="15651">MKCGVFMEVYTQELPLRTSRRVELIDITSMVSGVLESSGIRNGILNVFSRHSTSAIFINENESRLLSDIESMLEGTVPVDASYGHNAIDNNADSHLRAVLLGGSQTVPVINGSMDLGTWQSIFFAELDGPRNRRIRVSVAGKP</sequence>
<reference key="1">
    <citation type="journal article" date="1997" name="J. Bacteriol.">
        <title>Complete genome sequence of Methanobacterium thermoautotrophicum deltaH: functional analysis and comparative genomics.</title>
        <authorList>
            <person name="Smith D.R."/>
            <person name="Doucette-Stamm L.A."/>
            <person name="Deloughery C."/>
            <person name="Lee H.-M."/>
            <person name="Dubois J."/>
            <person name="Aldredge T."/>
            <person name="Bashirzadeh R."/>
            <person name="Blakely D."/>
            <person name="Cook R."/>
            <person name="Gilbert K."/>
            <person name="Harrison D."/>
            <person name="Hoang L."/>
            <person name="Keagle P."/>
            <person name="Lumm W."/>
            <person name="Pothier B."/>
            <person name="Qiu D."/>
            <person name="Spadafora R."/>
            <person name="Vicare R."/>
            <person name="Wang Y."/>
            <person name="Wierzbowski J."/>
            <person name="Gibson R."/>
            <person name="Jiwani N."/>
            <person name="Caruso A."/>
            <person name="Bush D."/>
            <person name="Safer H."/>
            <person name="Patwell D."/>
            <person name="Prabhakar S."/>
            <person name="McDougall S."/>
            <person name="Shimer G."/>
            <person name="Goyal A."/>
            <person name="Pietrovski S."/>
            <person name="Church G.M."/>
            <person name="Daniels C.J."/>
            <person name="Mao J.-I."/>
            <person name="Rice P."/>
            <person name="Noelling J."/>
            <person name="Reeve J.N."/>
        </authorList>
    </citation>
    <scope>NUCLEOTIDE SEQUENCE [LARGE SCALE GENOMIC DNA]</scope>
    <source>
        <strain>ATCC 29096 / DSM 1053 / JCM 10044 / NBRC 100330 / Delta H</strain>
    </source>
</reference>
<organism>
    <name type="scientific">Methanothermobacter thermautotrophicus (strain ATCC 29096 / DSM 1053 / JCM 10044 / NBRC 100330 / Delta H)</name>
    <name type="common">Methanobacterium thermoautotrophicum</name>
    <dbReference type="NCBI Taxonomy" id="187420"/>
    <lineage>
        <taxon>Archaea</taxon>
        <taxon>Methanobacteriati</taxon>
        <taxon>Methanobacteriota</taxon>
        <taxon>Methanomada group</taxon>
        <taxon>Methanobacteria</taxon>
        <taxon>Methanobacteriales</taxon>
        <taxon>Methanobacteriaceae</taxon>
        <taxon>Methanothermobacter</taxon>
    </lineage>
</organism>
<feature type="chain" id="PRO_0000088526" description="UPF0047 protein MTH_771">
    <location>
        <begin position="1"/>
        <end position="143"/>
    </location>
</feature>
<name>Y771_METTH</name>
<protein>
    <recommendedName>
        <fullName>UPF0047 protein MTH_771</fullName>
    </recommendedName>
</protein>
<evidence type="ECO:0000305" key="1"/>
<proteinExistence type="inferred from homology"/>
<gene>
    <name type="ordered locus">MTH_771</name>
</gene>
<comment type="similarity">
    <text evidence="1">Belongs to the UPF0047 family.</text>
</comment>
<accession>O26865</accession>
<dbReference type="EMBL" id="AE000666">
    <property type="protein sequence ID" value="AAB85274.1"/>
    <property type="molecule type" value="Genomic_DNA"/>
</dbReference>
<dbReference type="PIR" id="B69203">
    <property type="entry name" value="B69203"/>
</dbReference>
<dbReference type="SMR" id="O26865"/>
<dbReference type="FunCoup" id="O26865">
    <property type="interactions" value="31"/>
</dbReference>
<dbReference type="STRING" id="187420.MTH_771"/>
<dbReference type="PaxDb" id="187420-MTH_771"/>
<dbReference type="EnsemblBacteria" id="AAB85274">
    <property type="protein sequence ID" value="AAB85274"/>
    <property type="gene ID" value="MTH_771"/>
</dbReference>
<dbReference type="KEGG" id="mth:MTH_771"/>
<dbReference type="PATRIC" id="fig|187420.15.peg.759"/>
<dbReference type="HOGENOM" id="CLU_096980_1_1_2"/>
<dbReference type="InParanoid" id="O26865"/>
<dbReference type="Proteomes" id="UP000005223">
    <property type="component" value="Chromosome"/>
</dbReference>
<dbReference type="Gene3D" id="2.60.120.460">
    <property type="entry name" value="YjbQ-like"/>
    <property type="match status" value="1"/>
</dbReference>
<dbReference type="InterPro" id="IPR001602">
    <property type="entry name" value="UPF0047_YjbQ-like"/>
</dbReference>
<dbReference type="InterPro" id="IPR035917">
    <property type="entry name" value="YjbQ-like_sf"/>
</dbReference>
<dbReference type="NCBIfam" id="TIGR00149">
    <property type="entry name" value="TIGR00149_YjbQ"/>
    <property type="match status" value="1"/>
</dbReference>
<dbReference type="PANTHER" id="PTHR30615">
    <property type="entry name" value="UNCHARACTERIZED PROTEIN YJBQ-RELATED"/>
    <property type="match status" value="1"/>
</dbReference>
<dbReference type="PANTHER" id="PTHR30615:SF8">
    <property type="entry name" value="UPF0047 PROTEIN C4A8.02C"/>
    <property type="match status" value="1"/>
</dbReference>
<dbReference type="Pfam" id="PF01894">
    <property type="entry name" value="UPF0047"/>
    <property type="match status" value="1"/>
</dbReference>
<dbReference type="PIRSF" id="PIRSF004681">
    <property type="entry name" value="UCP004681"/>
    <property type="match status" value="1"/>
</dbReference>
<dbReference type="SUPFAM" id="SSF111038">
    <property type="entry name" value="YjbQ-like"/>
    <property type="match status" value="1"/>
</dbReference>
<dbReference type="PROSITE" id="PS01314">
    <property type="entry name" value="UPF0047"/>
    <property type="match status" value="1"/>
</dbReference>
<keyword id="KW-1185">Reference proteome</keyword>